<organism>
    <name type="scientific">Dechloromonas aromatica (strain RCB)</name>
    <dbReference type="NCBI Taxonomy" id="159087"/>
    <lineage>
        <taxon>Bacteria</taxon>
        <taxon>Pseudomonadati</taxon>
        <taxon>Pseudomonadota</taxon>
        <taxon>Betaproteobacteria</taxon>
        <taxon>Rhodocyclales</taxon>
        <taxon>Azonexaceae</taxon>
        <taxon>Dechloromonas</taxon>
    </lineage>
</organism>
<gene>
    <name type="ordered locus">Daro_3028</name>
</gene>
<dbReference type="EMBL" id="CP000089">
    <property type="protein sequence ID" value="AAZ47758.1"/>
    <property type="molecule type" value="Genomic_DNA"/>
</dbReference>
<dbReference type="SMR" id="Q47BM3"/>
<dbReference type="STRING" id="159087.Daro_3028"/>
<dbReference type="KEGG" id="dar:Daro_3028"/>
<dbReference type="eggNOG" id="COG1666">
    <property type="taxonomic scope" value="Bacteria"/>
</dbReference>
<dbReference type="HOGENOM" id="CLU_099839_1_0_4"/>
<dbReference type="OrthoDB" id="9801447at2"/>
<dbReference type="GO" id="GO:0005829">
    <property type="term" value="C:cytosol"/>
    <property type="evidence" value="ECO:0007669"/>
    <property type="project" value="TreeGrafter"/>
</dbReference>
<dbReference type="GO" id="GO:0000166">
    <property type="term" value="F:nucleotide binding"/>
    <property type="evidence" value="ECO:0007669"/>
    <property type="project" value="TreeGrafter"/>
</dbReference>
<dbReference type="CDD" id="cd11740">
    <property type="entry name" value="YajQ_like"/>
    <property type="match status" value="1"/>
</dbReference>
<dbReference type="Gene3D" id="3.30.70.860">
    <property type="match status" value="1"/>
</dbReference>
<dbReference type="Gene3D" id="3.30.70.990">
    <property type="entry name" value="YajQ-like, domain 2"/>
    <property type="match status" value="1"/>
</dbReference>
<dbReference type="HAMAP" id="MF_00632">
    <property type="entry name" value="YajQ"/>
    <property type="match status" value="1"/>
</dbReference>
<dbReference type="InterPro" id="IPR007551">
    <property type="entry name" value="DUF520"/>
</dbReference>
<dbReference type="InterPro" id="IPR035571">
    <property type="entry name" value="UPF0234-like_C"/>
</dbReference>
<dbReference type="InterPro" id="IPR035570">
    <property type="entry name" value="UPF0234_N"/>
</dbReference>
<dbReference type="InterPro" id="IPR036183">
    <property type="entry name" value="YajQ-like_sf"/>
</dbReference>
<dbReference type="NCBIfam" id="NF003819">
    <property type="entry name" value="PRK05412.1"/>
    <property type="match status" value="1"/>
</dbReference>
<dbReference type="PANTHER" id="PTHR30476">
    <property type="entry name" value="UPF0234 PROTEIN YAJQ"/>
    <property type="match status" value="1"/>
</dbReference>
<dbReference type="PANTHER" id="PTHR30476:SF0">
    <property type="entry name" value="UPF0234 PROTEIN YAJQ"/>
    <property type="match status" value="1"/>
</dbReference>
<dbReference type="Pfam" id="PF04461">
    <property type="entry name" value="DUF520"/>
    <property type="match status" value="1"/>
</dbReference>
<dbReference type="SUPFAM" id="SSF89963">
    <property type="entry name" value="YajQ-like"/>
    <property type="match status" value="2"/>
</dbReference>
<protein>
    <recommendedName>
        <fullName evidence="1">Nucleotide-binding protein Daro_3028</fullName>
    </recommendedName>
</protein>
<feature type="chain" id="PRO_1000147297" description="Nucleotide-binding protein Daro_3028">
    <location>
        <begin position="1"/>
        <end position="164"/>
    </location>
</feature>
<name>Y3028_DECAR</name>
<comment type="function">
    <text evidence="1">Nucleotide-binding protein.</text>
</comment>
<comment type="similarity">
    <text evidence="1">Belongs to the YajQ family.</text>
</comment>
<sequence length="164" mass="18468">MPSFDFTSEADMVGLKNAIDVTSRQIDNRYDFKGTSAKVELNEKDKVITLWGDSDFQLDQIKDLLFPAMEKKEKESVKRLDHQKVVSVSGNKVKQEMKIKDGIDSDLAKKIVKLVKDGKLKVQASIQGDTVRVQGAKRDDLQGCIALITKSITDFPIKYGNFRD</sequence>
<keyword id="KW-0547">Nucleotide-binding</keyword>
<accession>Q47BM3</accession>
<evidence type="ECO:0000255" key="1">
    <source>
        <dbReference type="HAMAP-Rule" id="MF_00632"/>
    </source>
</evidence>
<reference key="1">
    <citation type="journal article" date="2009" name="BMC Genomics">
        <title>Metabolic analysis of the soil microbe Dechloromonas aromatica str. RCB: indications of a surprisingly complex life-style and cryptic anaerobic pathways for aromatic degradation.</title>
        <authorList>
            <person name="Salinero K.K."/>
            <person name="Keller K."/>
            <person name="Feil W.S."/>
            <person name="Feil H."/>
            <person name="Trong S."/>
            <person name="Di Bartolo G."/>
            <person name="Lapidus A."/>
        </authorList>
    </citation>
    <scope>NUCLEOTIDE SEQUENCE [LARGE SCALE GENOMIC DNA]</scope>
    <source>
        <strain>RCB</strain>
    </source>
</reference>
<proteinExistence type="inferred from homology"/>